<dbReference type="EC" id="5.4.2.7" evidence="1"/>
<dbReference type="EMBL" id="CP000738">
    <property type="protein sequence ID" value="ABR62166.1"/>
    <property type="molecule type" value="Genomic_DNA"/>
</dbReference>
<dbReference type="RefSeq" id="WP_012067547.1">
    <property type="nucleotide sequence ID" value="NC_009636.1"/>
</dbReference>
<dbReference type="RefSeq" id="YP_001329001.1">
    <property type="nucleotide sequence ID" value="NC_009636.1"/>
</dbReference>
<dbReference type="SMR" id="A6UET6"/>
<dbReference type="STRING" id="366394.Smed_3345"/>
<dbReference type="KEGG" id="smd:Smed_3345"/>
<dbReference type="PATRIC" id="fig|366394.8.peg.6591"/>
<dbReference type="eggNOG" id="COG1015">
    <property type="taxonomic scope" value="Bacteria"/>
</dbReference>
<dbReference type="HOGENOM" id="CLU_053861_0_0_5"/>
<dbReference type="OrthoDB" id="9769930at2"/>
<dbReference type="UniPathway" id="UPA00002">
    <property type="reaction ID" value="UER00467"/>
</dbReference>
<dbReference type="Proteomes" id="UP000001108">
    <property type="component" value="Chromosome"/>
</dbReference>
<dbReference type="GO" id="GO:0005829">
    <property type="term" value="C:cytosol"/>
    <property type="evidence" value="ECO:0007669"/>
    <property type="project" value="TreeGrafter"/>
</dbReference>
<dbReference type="GO" id="GO:0000287">
    <property type="term" value="F:magnesium ion binding"/>
    <property type="evidence" value="ECO:0007669"/>
    <property type="project" value="InterPro"/>
</dbReference>
<dbReference type="GO" id="GO:0030145">
    <property type="term" value="F:manganese ion binding"/>
    <property type="evidence" value="ECO:0007669"/>
    <property type="project" value="UniProtKB-UniRule"/>
</dbReference>
<dbReference type="GO" id="GO:0008973">
    <property type="term" value="F:phosphopentomutase activity"/>
    <property type="evidence" value="ECO:0007669"/>
    <property type="project" value="UniProtKB-UniRule"/>
</dbReference>
<dbReference type="GO" id="GO:0006018">
    <property type="term" value="P:2-deoxyribose 1-phosphate catabolic process"/>
    <property type="evidence" value="ECO:0007669"/>
    <property type="project" value="UniProtKB-UniRule"/>
</dbReference>
<dbReference type="GO" id="GO:0006015">
    <property type="term" value="P:5-phosphoribose 1-diphosphate biosynthetic process"/>
    <property type="evidence" value="ECO:0007669"/>
    <property type="project" value="UniProtKB-UniPathway"/>
</dbReference>
<dbReference type="GO" id="GO:0043094">
    <property type="term" value="P:metabolic compound salvage"/>
    <property type="evidence" value="ECO:0007669"/>
    <property type="project" value="InterPro"/>
</dbReference>
<dbReference type="GO" id="GO:0009117">
    <property type="term" value="P:nucleotide metabolic process"/>
    <property type="evidence" value="ECO:0007669"/>
    <property type="project" value="InterPro"/>
</dbReference>
<dbReference type="CDD" id="cd16009">
    <property type="entry name" value="PPM"/>
    <property type="match status" value="1"/>
</dbReference>
<dbReference type="FunFam" id="3.30.70.1250:FF:000001">
    <property type="entry name" value="Phosphopentomutase"/>
    <property type="match status" value="1"/>
</dbReference>
<dbReference type="Gene3D" id="3.40.720.10">
    <property type="entry name" value="Alkaline Phosphatase, subunit A"/>
    <property type="match status" value="1"/>
</dbReference>
<dbReference type="Gene3D" id="3.30.70.1250">
    <property type="entry name" value="Phosphopentomutase"/>
    <property type="match status" value="1"/>
</dbReference>
<dbReference type="HAMAP" id="MF_00740">
    <property type="entry name" value="Phosphopentomut"/>
    <property type="match status" value="1"/>
</dbReference>
<dbReference type="InterPro" id="IPR017850">
    <property type="entry name" value="Alkaline_phosphatase_core_sf"/>
</dbReference>
<dbReference type="InterPro" id="IPR010045">
    <property type="entry name" value="DeoB"/>
</dbReference>
<dbReference type="InterPro" id="IPR006124">
    <property type="entry name" value="Metalloenzyme"/>
</dbReference>
<dbReference type="InterPro" id="IPR024052">
    <property type="entry name" value="Phosphopentomutase_DeoB_cap_sf"/>
</dbReference>
<dbReference type="NCBIfam" id="TIGR01696">
    <property type="entry name" value="deoB"/>
    <property type="match status" value="1"/>
</dbReference>
<dbReference type="NCBIfam" id="NF003766">
    <property type="entry name" value="PRK05362.1"/>
    <property type="match status" value="1"/>
</dbReference>
<dbReference type="PANTHER" id="PTHR21110">
    <property type="entry name" value="PHOSPHOPENTOMUTASE"/>
    <property type="match status" value="1"/>
</dbReference>
<dbReference type="PANTHER" id="PTHR21110:SF0">
    <property type="entry name" value="PHOSPHOPENTOMUTASE"/>
    <property type="match status" value="1"/>
</dbReference>
<dbReference type="Pfam" id="PF01676">
    <property type="entry name" value="Metalloenzyme"/>
    <property type="match status" value="1"/>
</dbReference>
<dbReference type="PIRSF" id="PIRSF001491">
    <property type="entry name" value="Ppentomutase"/>
    <property type="match status" value="1"/>
</dbReference>
<dbReference type="SUPFAM" id="SSF53649">
    <property type="entry name" value="Alkaline phosphatase-like"/>
    <property type="match status" value="1"/>
</dbReference>
<dbReference type="SUPFAM" id="SSF143856">
    <property type="entry name" value="DeoB insert domain-like"/>
    <property type="match status" value="1"/>
</dbReference>
<accession>A6UET6</accession>
<comment type="function">
    <text evidence="1">Isomerase that catalyzes the conversion of deoxy-ribose 1-phosphate (dRib-1-P) and ribose 1-phosphate (Rib-1-P) to deoxy-ribose 5-phosphate (dRib-5-P) and ribose 5-phosphate (Rib-5-P), respectively.</text>
</comment>
<comment type="catalytic activity">
    <reaction evidence="1">
        <text>2-deoxy-alpha-D-ribose 1-phosphate = 2-deoxy-D-ribose 5-phosphate</text>
        <dbReference type="Rhea" id="RHEA:27658"/>
        <dbReference type="ChEBI" id="CHEBI:57259"/>
        <dbReference type="ChEBI" id="CHEBI:62877"/>
        <dbReference type="EC" id="5.4.2.7"/>
    </reaction>
</comment>
<comment type="catalytic activity">
    <reaction evidence="1">
        <text>alpha-D-ribose 1-phosphate = D-ribose 5-phosphate</text>
        <dbReference type="Rhea" id="RHEA:18793"/>
        <dbReference type="ChEBI" id="CHEBI:57720"/>
        <dbReference type="ChEBI" id="CHEBI:78346"/>
        <dbReference type="EC" id="5.4.2.7"/>
    </reaction>
</comment>
<comment type="cofactor">
    <cofactor evidence="1">
        <name>Mn(2+)</name>
        <dbReference type="ChEBI" id="CHEBI:29035"/>
    </cofactor>
    <text evidence="1">Binds 2 manganese ions.</text>
</comment>
<comment type="pathway">
    <text evidence="1">Carbohydrate degradation; 2-deoxy-D-ribose 1-phosphate degradation; D-glyceraldehyde 3-phosphate and acetaldehyde from 2-deoxy-alpha-D-ribose 1-phosphate: step 1/2.</text>
</comment>
<comment type="subcellular location">
    <subcellularLocation>
        <location evidence="1">Cytoplasm</location>
    </subcellularLocation>
</comment>
<comment type="similarity">
    <text evidence="1">Belongs to the phosphopentomutase family.</text>
</comment>
<organism>
    <name type="scientific">Sinorhizobium medicae (strain WSM419)</name>
    <name type="common">Ensifer medicae</name>
    <dbReference type="NCBI Taxonomy" id="366394"/>
    <lineage>
        <taxon>Bacteria</taxon>
        <taxon>Pseudomonadati</taxon>
        <taxon>Pseudomonadota</taxon>
        <taxon>Alphaproteobacteria</taxon>
        <taxon>Hyphomicrobiales</taxon>
        <taxon>Rhizobiaceae</taxon>
        <taxon>Sinorhizobium/Ensifer group</taxon>
        <taxon>Sinorhizobium</taxon>
    </lineage>
</organism>
<evidence type="ECO:0000255" key="1">
    <source>
        <dbReference type="HAMAP-Rule" id="MF_00740"/>
    </source>
</evidence>
<name>DEOB_SINMW</name>
<reference key="1">
    <citation type="submission" date="2007-06" db="EMBL/GenBank/DDBJ databases">
        <title>Complete sequence of Sinorhizobium medicae WSM419 chromosome.</title>
        <authorList>
            <consortium name="US DOE Joint Genome Institute"/>
            <person name="Copeland A."/>
            <person name="Lucas S."/>
            <person name="Lapidus A."/>
            <person name="Barry K."/>
            <person name="Glavina del Rio T."/>
            <person name="Dalin E."/>
            <person name="Tice H."/>
            <person name="Pitluck S."/>
            <person name="Chain P."/>
            <person name="Malfatti S."/>
            <person name="Shin M."/>
            <person name="Vergez L."/>
            <person name="Schmutz J."/>
            <person name="Larimer F."/>
            <person name="Land M."/>
            <person name="Hauser L."/>
            <person name="Kyrpides N."/>
            <person name="Mikhailova N."/>
            <person name="Reeve W.G."/>
            <person name="Richardson P."/>
        </authorList>
    </citation>
    <scope>NUCLEOTIDE SEQUENCE [LARGE SCALE GENOMIC DNA]</scope>
    <source>
        <strain>WSM419</strain>
    </source>
</reference>
<keyword id="KW-0963">Cytoplasm</keyword>
<keyword id="KW-0413">Isomerase</keyword>
<keyword id="KW-0464">Manganese</keyword>
<keyword id="KW-0479">Metal-binding</keyword>
<sequence length="406" mass="43345">MARAFLFVLDSFGIGNAPDAGAFGDLGADTLGHIAEFCAAGAADRAGLREGPLNLPNMSALGLMHAARLATGRLPAGMALPERVYGVYGAASEVSRGKDTPSGHWEIAGTPVTFDWGYFPADGDAFPPELVEAICREGDVPGILGNCHASGTDIIARLGEEHMRTGKPICYTSSDSVFQIAAHEQTFGLERLQDLCAVVRRLVDEYNIGRVIARPFVGSDPGSFTRTGNRRDYSVLPPAPTVLDRLKEAGRTVHAIGKIADIFAHQGVTRLTKANGNMALFDASLAAIDEAEDGALIFTNFVDFDMLYGHRRDVAGYAAALEAFDARLPDLDRRLKPGDMVILTADHGCDPTWRGTDHTRERVPVLMFGPTLRSRSVGIVGSFAHIGETVASHLGIDPGPHGRSLI</sequence>
<protein>
    <recommendedName>
        <fullName evidence="1">Phosphopentomutase</fullName>
        <ecNumber evidence="1">5.4.2.7</ecNumber>
    </recommendedName>
    <alternativeName>
        <fullName evidence="1">Phosphodeoxyribomutase</fullName>
    </alternativeName>
</protein>
<gene>
    <name evidence="1" type="primary">deoB</name>
    <name type="ordered locus">Smed_3345</name>
</gene>
<proteinExistence type="inferred from homology"/>
<feature type="chain" id="PRO_1000046405" description="Phosphopentomutase">
    <location>
        <begin position="1"/>
        <end position="406"/>
    </location>
</feature>
<feature type="binding site" evidence="1">
    <location>
        <position position="10"/>
    </location>
    <ligand>
        <name>Mn(2+)</name>
        <dbReference type="ChEBI" id="CHEBI:29035"/>
        <label>1</label>
    </ligand>
</feature>
<feature type="binding site" evidence="1">
    <location>
        <position position="305"/>
    </location>
    <ligand>
        <name>Mn(2+)</name>
        <dbReference type="ChEBI" id="CHEBI:29035"/>
        <label>2</label>
    </ligand>
</feature>
<feature type="binding site" evidence="1">
    <location>
        <position position="310"/>
    </location>
    <ligand>
        <name>Mn(2+)</name>
        <dbReference type="ChEBI" id="CHEBI:29035"/>
        <label>2</label>
    </ligand>
</feature>
<feature type="binding site" evidence="1">
    <location>
        <position position="346"/>
    </location>
    <ligand>
        <name>Mn(2+)</name>
        <dbReference type="ChEBI" id="CHEBI:29035"/>
        <label>1</label>
    </ligand>
</feature>
<feature type="binding site" evidence="1">
    <location>
        <position position="347"/>
    </location>
    <ligand>
        <name>Mn(2+)</name>
        <dbReference type="ChEBI" id="CHEBI:29035"/>
        <label>1</label>
    </ligand>
</feature>
<feature type="binding site" evidence="1">
    <location>
        <position position="358"/>
    </location>
    <ligand>
        <name>Mn(2+)</name>
        <dbReference type="ChEBI" id="CHEBI:29035"/>
        <label>2</label>
    </ligand>
</feature>